<comment type="function">
    <text evidence="1">Plays an important role in the de novo pathway of purine nucleotide biosynthesis. Catalyzes the first committed step in the biosynthesis of AMP from IMP.</text>
</comment>
<comment type="catalytic activity">
    <reaction evidence="1">
        <text>IMP + L-aspartate + GTP = N(6)-(1,2-dicarboxyethyl)-AMP + GDP + phosphate + 2 H(+)</text>
        <dbReference type="Rhea" id="RHEA:15753"/>
        <dbReference type="ChEBI" id="CHEBI:15378"/>
        <dbReference type="ChEBI" id="CHEBI:29991"/>
        <dbReference type="ChEBI" id="CHEBI:37565"/>
        <dbReference type="ChEBI" id="CHEBI:43474"/>
        <dbReference type="ChEBI" id="CHEBI:57567"/>
        <dbReference type="ChEBI" id="CHEBI:58053"/>
        <dbReference type="ChEBI" id="CHEBI:58189"/>
        <dbReference type="EC" id="6.3.4.4"/>
    </reaction>
</comment>
<comment type="cofactor">
    <cofactor evidence="1">
        <name>Mg(2+)</name>
        <dbReference type="ChEBI" id="CHEBI:18420"/>
    </cofactor>
    <text evidence="1">Binds 1 Mg(2+) ion per subunit.</text>
</comment>
<comment type="pathway">
    <text evidence="1">Purine metabolism; AMP biosynthesis via de novo pathway; AMP from IMP: step 1/2.</text>
</comment>
<comment type="subunit">
    <text evidence="1">Homodimer.</text>
</comment>
<comment type="subcellular location">
    <subcellularLocation>
        <location evidence="1">Cytoplasm</location>
    </subcellularLocation>
</comment>
<comment type="similarity">
    <text evidence="1">Belongs to the adenylosuccinate synthetase family.</text>
</comment>
<reference key="1">
    <citation type="journal article" date="2002" name="Nucleic Acids Res.">
        <title>Genome sequence of Shigella flexneri 2a: insights into pathogenicity through comparison with genomes of Escherichia coli K12 and O157.</title>
        <authorList>
            <person name="Jin Q."/>
            <person name="Yuan Z."/>
            <person name="Xu J."/>
            <person name="Wang Y."/>
            <person name="Shen Y."/>
            <person name="Lu W."/>
            <person name="Wang J."/>
            <person name="Liu H."/>
            <person name="Yang J."/>
            <person name="Yang F."/>
            <person name="Zhang X."/>
            <person name="Zhang J."/>
            <person name="Yang G."/>
            <person name="Wu H."/>
            <person name="Qu D."/>
            <person name="Dong J."/>
            <person name="Sun L."/>
            <person name="Xue Y."/>
            <person name="Zhao A."/>
            <person name="Gao Y."/>
            <person name="Zhu J."/>
            <person name="Kan B."/>
            <person name="Ding K."/>
            <person name="Chen S."/>
            <person name="Cheng H."/>
            <person name="Yao Z."/>
            <person name="He B."/>
            <person name="Chen R."/>
            <person name="Ma D."/>
            <person name="Qiang B."/>
            <person name="Wen Y."/>
            <person name="Hou Y."/>
            <person name="Yu J."/>
        </authorList>
    </citation>
    <scope>NUCLEOTIDE SEQUENCE [LARGE SCALE GENOMIC DNA]</scope>
    <source>
        <strain>301 / Serotype 2a</strain>
    </source>
</reference>
<reference key="2">
    <citation type="journal article" date="2003" name="Infect. Immun.">
        <title>Complete genome sequence and comparative genomics of Shigella flexneri serotype 2a strain 2457T.</title>
        <authorList>
            <person name="Wei J."/>
            <person name="Goldberg M.B."/>
            <person name="Burland V."/>
            <person name="Venkatesan M.M."/>
            <person name="Deng W."/>
            <person name="Fournier G."/>
            <person name="Mayhew G.F."/>
            <person name="Plunkett G. III"/>
            <person name="Rose D.J."/>
            <person name="Darling A."/>
            <person name="Mau B."/>
            <person name="Perna N.T."/>
            <person name="Payne S.M."/>
            <person name="Runyen-Janecky L.J."/>
            <person name="Zhou S."/>
            <person name="Schwartz D.C."/>
            <person name="Blattner F.R."/>
        </authorList>
    </citation>
    <scope>NUCLEOTIDE SEQUENCE [LARGE SCALE GENOMIC DNA]</scope>
    <source>
        <strain>ATCC 700930 / 2457T / Serotype 2a</strain>
    </source>
</reference>
<gene>
    <name evidence="1" type="primary">purA</name>
    <name type="ordered locus">SF4332</name>
    <name type="ordered locus">S4600</name>
</gene>
<sequence>MGNNVVVLGTQWGDEGKGKIVDLLTERAKYVVRYQGGHNAGHTLVINGEKTVLHLIPSGILRENVTSIIGNGVVLSPAALMKEMKELEDRGIPVRERLLLSEACPLILDYHVALDNAREKARGAKAIGTTGRGIGPAYEDKVARRGLRVGDLFDKETFAEKLKEVMEYHNFQLVNYYKAEAVDYQKVLDDTMAVADILTSMVVDVSDLLDQARQRGDFVMFEGAQGTLLDIDHGTYPYVTSSNTTAGGVATGSGLGPRYVDYVLGILKAYSTRVGAGPFPAELFDETGEFLCKQGNEFGATTGRRRRTGWLDTVAVRRAVQLNSLSGFCLTKLDVLDGLKEVKLCVAYRMPDGREVTTTPLAADDWKGVEPIYETMPGWSESTFGVKDRSGLPQAALNYIKRIEELTGVPIDIISTGPDRTETMILRDPFDA</sequence>
<protein>
    <recommendedName>
        <fullName evidence="1">Adenylosuccinate synthetase</fullName>
        <shortName evidence="1">AMPSase</shortName>
        <shortName evidence="1">AdSS</shortName>
        <ecNumber evidence="1">6.3.4.4</ecNumber>
    </recommendedName>
    <alternativeName>
        <fullName evidence="1">IMP--aspartate ligase</fullName>
    </alternativeName>
</protein>
<keyword id="KW-0963">Cytoplasm</keyword>
<keyword id="KW-0342">GTP-binding</keyword>
<keyword id="KW-0436">Ligase</keyword>
<keyword id="KW-0460">Magnesium</keyword>
<keyword id="KW-0479">Metal-binding</keyword>
<keyword id="KW-0547">Nucleotide-binding</keyword>
<keyword id="KW-0658">Purine biosynthesis</keyword>
<keyword id="KW-1185">Reference proteome</keyword>
<proteinExistence type="inferred from homology"/>
<organism>
    <name type="scientific">Shigella flexneri</name>
    <dbReference type="NCBI Taxonomy" id="623"/>
    <lineage>
        <taxon>Bacteria</taxon>
        <taxon>Pseudomonadati</taxon>
        <taxon>Pseudomonadota</taxon>
        <taxon>Gammaproteobacteria</taxon>
        <taxon>Enterobacterales</taxon>
        <taxon>Enterobacteriaceae</taxon>
        <taxon>Shigella</taxon>
    </lineage>
</organism>
<feature type="chain" id="PRO_0000095224" description="Adenylosuccinate synthetase">
    <location>
        <begin position="1"/>
        <end position="432"/>
    </location>
</feature>
<feature type="active site" description="Proton acceptor" evidence="1">
    <location>
        <position position="14"/>
    </location>
</feature>
<feature type="active site" description="Proton donor" evidence="1">
    <location>
        <position position="42"/>
    </location>
</feature>
<feature type="binding site" evidence="1">
    <location>
        <begin position="13"/>
        <end position="19"/>
    </location>
    <ligand>
        <name>GTP</name>
        <dbReference type="ChEBI" id="CHEBI:37565"/>
    </ligand>
</feature>
<feature type="binding site" description="in other chain" evidence="1">
    <location>
        <begin position="14"/>
        <end position="17"/>
    </location>
    <ligand>
        <name>IMP</name>
        <dbReference type="ChEBI" id="CHEBI:58053"/>
        <note>ligand shared between dimeric partners</note>
    </ligand>
</feature>
<feature type="binding site" evidence="1">
    <location>
        <position position="14"/>
    </location>
    <ligand>
        <name>Mg(2+)</name>
        <dbReference type="ChEBI" id="CHEBI:18420"/>
    </ligand>
</feature>
<feature type="binding site" description="in other chain" evidence="1">
    <location>
        <begin position="39"/>
        <end position="42"/>
    </location>
    <ligand>
        <name>IMP</name>
        <dbReference type="ChEBI" id="CHEBI:58053"/>
        <note>ligand shared between dimeric partners</note>
    </ligand>
</feature>
<feature type="binding site" evidence="1">
    <location>
        <begin position="41"/>
        <end position="43"/>
    </location>
    <ligand>
        <name>GTP</name>
        <dbReference type="ChEBI" id="CHEBI:37565"/>
    </ligand>
</feature>
<feature type="binding site" evidence="1">
    <location>
        <position position="41"/>
    </location>
    <ligand>
        <name>Mg(2+)</name>
        <dbReference type="ChEBI" id="CHEBI:18420"/>
    </ligand>
</feature>
<feature type="binding site" description="in other chain" evidence="1">
    <location>
        <position position="130"/>
    </location>
    <ligand>
        <name>IMP</name>
        <dbReference type="ChEBI" id="CHEBI:58053"/>
        <note>ligand shared between dimeric partners</note>
    </ligand>
</feature>
<feature type="binding site" evidence="1">
    <location>
        <position position="144"/>
    </location>
    <ligand>
        <name>IMP</name>
        <dbReference type="ChEBI" id="CHEBI:58053"/>
        <note>ligand shared between dimeric partners</note>
    </ligand>
</feature>
<feature type="binding site" description="in other chain" evidence="1">
    <location>
        <position position="225"/>
    </location>
    <ligand>
        <name>IMP</name>
        <dbReference type="ChEBI" id="CHEBI:58053"/>
        <note>ligand shared between dimeric partners</note>
    </ligand>
</feature>
<feature type="binding site" description="in other chain" evidence="1">
    <location>
        <position position="240"/>
    </location>
    <ligand>
        <name>IMP</name>
        <dbReference type="ChEBI" id="CHEBI:58053"/>
        <note>ligand shared between dimeric partners</note>
    </ligand>
</feature>
<feature type="binding site" evidence="1">
    <location>
        <begin position="300"/>
        <end position="306"/>
    </location>
    <ligand>
        <name>substrate</name>
    </ligand>
</feature>
<feature type="binding site" description="in other chain" evidence="1">
    <location>
        <position position="304"/>
    </location>
    <ligand>
        <name>IMP</name>
        <dbReference type="ChEBI" id="CHEBI:58053"/>
        <note>ligand shared between dimeric partners</note>
    </ligand>
</feature>
<feature type="binding site" evidence="1">
    <location>
        <position position="306"/>
    </location>
    <ligand>
        <name>GTP</name>
        <dbReference type="ChEBI" id="CHEBI:37565"/>
    </ligand>
</feature>
<feature type="binding site" evidence="1">
    <location>
        <begin position="332"/>
        <end position="334"/>
    </location>
    <ligand>
        <name>GTP</name>
        <dbReference type="ChEBI" id="CHEBI:37565"/>
    </ligand>
</feature>
<feature type="binding site" evidence="1">
    <location>
        <begin position="415"/>
        <end position="417"/>
    </location>
    <ligand>
        <name>GTP</name>
        <dbReference type="ChEBI" id="CHEBI:37565"/>
    </ligand>
</feature>
<name>PURA_SHIFL</name>
<dbReference type="EC" id="6.3.4.4" evidence="1"/>
<dbReference type="EMBL" id="AE005674">
    <property type="protein sequence ID" value="AAN45749.1"/>
    <property type="molecule type" value="Genomic_DNA"/>
</dbReference>
<dbReference type="EMBL" id="AE014073">
    <property type="protein sequence ID" value="AAP19532.1"/>
    <property type="molecule type" value="Genomic_DNA"/>
</dbReference>
<dbReference type="RefSeq" id="NP_710042.1">
    <property type="nucleotide sequence ID" value="NC_004337.2"/>
</dbReference>
<dbReference type="RefSeq" id="WP_000527949.1">
    <property type="nucleotide sequence ID" value="NZ_WPGW01000048.1"/>
</dbReference>
<dbReference type="SMR" id="Q83P33"/>
<dbReference type="STRING" id="198214.SF4332"/>
<dbReference type="DrugBank" id="DB02954">
    <property type="generic name" value="(Carboxyhydroxyamino)Ethanoic Acid"/>
</dbReference>
<dbReference type="DrugBank" id="DB04566">
    <property type="generic name" value="Inosinic Acid"/>
</dbReference>
<dbReference type="PaxDb" id="198214-SF4332"/>
<dbReference type="GeneID" id="1023524"/>
<dbReference type="KEGG" id="sfl:SF4332"/>
<dbReference type="KEGG" id="sfx:S4600"/>
<dbReference type="PATRIC" id="fig|198214.7.peg.5106"/>
<dbReference type="HOGENOM" id="CLU_029848_0_0_6"/>
<dbReference type="UniPathway" id="UPA00075">
    <property type="reaction ID" value="UER00335"/>
</dbReference>
<dbReference type="Proteomes" id="UP000001006">
    <property type="component" value="Chromosome"/>
</dbReference>
<dbReference type="Proteomes" id="UP000002673">
    <property type="component" value="Chromosome"/>
</dbReference>
<dbReference type="GO" id="GO:0005737">
    <property type="term" value="C:cytoplasm"/>
    <property type="evidence" value="ECO:0007669"/>
    <property type="project" value="UniProtKB-SubCell"/>
</dbReference>
<dbReference type="GO" id="GO:0004019">
    <property type="term" value="F:adenylosuccinate synthase activity"/>
    <property type="evidence" value="ECO:0007669"/>
    <property type="project" value="UniProtKB-UniRule"/>
</dbReference>
<dbReference type="GO" id="GO:0005525">
    <property type="term" value="F:GTP binding"/>
    <property type="evidence" value="ECO:0007669"/>
    <property type="project" value="UniProtKB-UniRule"/>
</dbReference>
<dbReference type="GO" id="GO:0000287">
    <property type="term" value="F:magnesium ion binding"/>
    <property type="evidence" value="ECO:0007669"/>
    <property type="project" value="UniProtKB-UniRule"/>
</dbReference>
<dbReference type="GO" id="GO:0044208">
    <property type="term" value="P:'de novo' AMP biosynthetic process"/>
    <property type="evidence" value="ECO:0007669"/>
    <property type="project" value="UniProtKB-UniRule"/>
</dbReference>
<dbReference type="GO" id="GO:0046040">
    <property type="term" value="P:IMP metabolic process"/>
    <property type="evidence" value="ECO:0007669"/>
    <property type="project" value="TreeGrafter"/>
</dbReference>
<dbReference type="CDD" id="cd03108">
    <property type="entry name" value="AdSS"/>
    <property type="match status" value="1"/>
</dbReference>
<dbReference type="FunFam" id="1.10.300.10:FF:000001">
    <property type="entry name" value="Adenylosuccinate synthetase"/>
    <property type="match status" value="1"/>
</dbReference>
<dbReference type="FunFam" id="3.90.170.10:FF:000001">
    <property type="entry name" value="Adenylosuccinate synthetase"/>
    <property type="match status" value="1"/>
</dbReference>
<dbReference type="Gene3D" id="3.40.440.10">
    <property type="entry name" value="Adenylosuccinate Synthetase, subunit A, domain 1"/>
    <property type="match status" value="1"/>
</dbReference>
<dbReference type="Gene3D" id="1.10.300.10">
    <property type="entry name" value="Adenylosuccinate Synthetase, subunit A, domain 2"/>
    <property type="match status" value="1"/>
</dbReference>
<dbReference type="Gene3D" id="3.90.170.10">
    <property type="entry name" value="Adenylosuccinate Synthetase, subunit A, domain 3"/>
    <property type="match status" value="1"/>
</dbReference>
<dbReference type="HAMAP" id="MF_00011">
    <property type="entry name" value="Adenylosucc_synth"/>
    <property type="match status" value="1"/>
</dbReference>
<dbReference type="InterPro" id="IPR018220">
    <property type="entry name" value="Adenylosuccin_syn_GTP-bd"/>
</dbReference>
<dbReference type="InterPro" id="IPR033128">
    <property type="entry name" value="Adenylosuccin_syn_Lys_AS"/>
</dbReference>
<dbReference type="InterPro" id="IPR042109">
    <property type="entry name" value="Adenylosuccinate_synth_dom1"/>
</dbReference>
<dbReference type="InterPro" id="IPR042110">
    <property type="entry name" value="Adenylosuccinate_synth_dom2"/>
</dbReference>
<dbReference type="InterPro" id="IPR042111">
    <property type="entry name" value="Adenylosuccinate_synth_dom3"/>
</dbReference>
<dbReference type="InterPro" id="IPR001114">
    <property type="entry name" value="Adenylosuccinate_synthetase"/>
</dbReference>
<dbReference type="InterPro" id="IPR027417">
    <property type="entry name" value="P-loop_NTPase"/>
</dbReference>
<dbReference type="NCBIfam" id="NF002223">
    <property type="entry name" value="PRK01117.1"/>
    <property type="match status" value="1"/>
</dbReference>
<dbReference type="NCBIfam" id="TIGR00184">
    <property type="entry name" value="purA"/>
    <property type="match status" value="1"/>
</dbReference>
<dbReference type="PANTHER" id="PTHR11846">
    <property type="entry name" value="ADENYLOSUCCINATE SYNTHETASE"/>
    <property type="match status" value="1"/>
</dbReference>
<dbReference type="PANTHER" id="PTHR11846:SF0">
    <property type="entry name" value="ADENYLOSUCCINATE SYNTHETASE"/>
    <property type="match status" value="1"/>
</dbReference>
<dbReference type="Pfam" id="PF00709">
    <property type="entry name" value="Adenylsucc_synt"/>
    <property type="match status" value="1"/>
</dbReference>
<dbReference type="SMART" id="SM00788">
    <property type="entry name" value="Adenylsucc_synt"/>
    <property type="match status" value="1"/>
</dbReference>
<dbReference type="SUPFAM" id="SSF52540">
    <property type="entry name" value="P-loop containing nucleoside triphosphate hydrolases"/>
    <property type="match status" value="1"/>
</dbReference>
<dbReference type="PROSITE" id="PS01266">
    <property type="entry name" value="ADENYLOSUCCIN_SYN_1"/>
    <property type="match status" value="1"/>
</dbReference>
<dbReference type="PROSITE" id="PS00513">
    <property type="entry name" value="ADENYLOSUCCIN_SYN_2"/>
    <property type="match status" value="1"/>
</dbReference>
<accession>Q83P33</accession>
<evidence type="ECO:0000255" key="1">
    <source>
        <dbReference type="HAMAP-Rule" id="MF_00011"/>
    </source>
</evidence>